<comment type="function">
    <text evidence="2">Cleaves peptides in various proteins in a process that requires ATP hydrolysis. Has a chymotrypsin-like activity. Plays a major role in the degradation of misfolded proteins.</text>
</comment>
<comment type="catalytic activity">
    <reaction evidence="2">
        <text>Hydrolysis of proteins to small peptides in the presence of ATP and magnesium. alpha-casein is the usual test substrate. In the absence of ATP, only oligopeptides shorter than five residues are hydrolyzed (such as succinyl-Leu-Tyr-|-NHMec, and Leu-Tyr-Leu-|-Tyr-Trp, in which cleavage of the -Tyr-|-Leu- and -Tyr-|-Trp bonds also occurs).</text>
        <dbReference type="EC" id="3.4.21.92"/>
    </reaction>
</comment>
<comment type="subunit">
    <text evidence="2">Fourteen ClpP subunits assemble into 2 heptameric rings which stack back to back to give a disk-like structure with a central cavity, resembling the structure of eukaryotic proteasomes.</text>
</comment>
<comment type="subcellular location">
    <subcellularLocation>
        <location evidence="2">Cytoplasm</location>
    </subcellularLocation>
</comment>
<comment type="similarity">
    <text evidence="2">Belongs to the peptidase S14 family.</text>
</comment>
<comment type="sequence caution" evidence="3">
    <conflict type="erroneous initiation">
        <sequence resource="EMBL-CDS" id="AAF39527"/>
    </conflict>
</comment>
<name>CLPP1_CHLMU</name>
<feature type="initiator methionine" description="Removed" evidence="1">
    <location>
        <position position="1"/>
    </location>
</feature>
<feature type="chain" id="PRO_0000179530" description="ATP-dependent Clp protease proteolytic subunit 1">
    <location>
        <begin position="2"/>
        <end position="192"/>
    </location>
</feature>
<feature type="active site" description="Nucleophile" evidence="2">
    <location>
        <position position="92"/>
    </location>
</feature>
<feature type="active site" evidence="2">
    <location>
        <position position="117"/>
    </location>
</feature>
<reference key="1">
    <citation type="journal article" date="2000" name="Nucleic Acids Res.">
        <title>Genome sequences of Chlamydia trachomatis MoPn and Chlamydia pneumoniae AR39.</title>
        <authorList>
            <person name="Read T.D."/>
            <person name="Brunham R.C."/>
            <person name="Shen C."/>
            <person name="Gill S.R."/>
            <person name="Heidelberg J.F."/>
            <person name="White O."/>
            <person name="Hickey E.K."/>
            <person name="Peterson J.D."/>
            <person name="Utterback T.R."/>
            <person name="Berry K.J."/>
            <person name="Bass S."/>
            <person name="Linher K.D."/>
            <person name="Weidman J.F."/>
            <person name="Khouri H.M."/>
            <person name="Craven B."/>
            <person name="Bowman C."/>
            <person name="Dodson R.J."/>
            <person name="Gwinn M.L."/>
            <person name="Nelson W.C."/>
            <person name="DeBoy R.T."/>
            <person name="Kolonay J.F."/>
            <person name="McClarty G."/>
            <person name="Salzberg S.L."/>
            <person name="Eisen J.A."/>
            <person name="Fraser C.M."/>
        </authorList>
    </citation>
    <scope>NUCLEOTIDE SEQUENCE [LARGE SCALE GENOMIC DNA]</scope>
    <source>
        <strain>MoPn / Nigg</strain>
    </source>
</reference>
<accession>Q9PJW1</accession>
<proteinExistence type="inferred from homology"/>
<keyword id="KW-0963">Cytoplasm</keyword>
<keyword id="KW-0378">Hydrolase</keyword>
<keyword id="KW-0645">Protease</keyword>
<keyword id="KW-0720">Serine protease</keyword>
<organism>
    <name type="scientific">Chlamydia muridarum (strain MoPn / Nigg)</name>
    <dbReference type="NCBI Taxonomy" id="243161"/>
    <lineage>
        <taxon>Bacteria</taxon>
        <taxon>Pseudomonadati</taxon>
        <taxon>Chlamydiota</taxon>
        <taxon>Chlamydiia</taxon>
        <taxon>Chlamydiales</taxon>
        <taxon>Chlamydiaceae</taxon>
        <taxon>Chlamydia/Chlamydophila group</taxon>
        <taxon>Chlamydia</taxon>
    </lineage>
</organism>
<gene>
    <name evidence="2" type="primary">clpP1</name>
    <name type="ordered locus">TC_0715</name>
</gene>
<protein>
    <recommendedName>
        <fullName evidence="2">ATP-dependent Clp protease proteolytic subunit 1</fullName>
        <ecNumber evidence="2">3.4.21.92</ecNumber>
    </recommendedName>
    <alternativeName>
        <fullName evidence="2">Endopeptidase Clp 1</fullName>
    </alternativeName>
</protein>
<sequence>MPEGEMMHKLQDIIDRKLLDSRRIFFSEPVTEKSAAEAIKKLWYLELTSPGQPIVFVINSPGGSVDAGFAVWDQIKMISSPVTTVVTGLAASMGSVLSLCAAPGRRFATPHARIMIHQPSIGGTITGQATDLDIHAREILKTKARIIDVYVEATGQSREVIEKAIDRDMWMSANEAMEFGLLDGILFSFNDL</sequence>
<evidence type="ECO:0000250" key="1"/>
<evidence type="ECO:0000255" key="2">
    <source>
        <dbReference type="HAMAP-Rule" id="MF_00444"/>
    </source>
</evidence>
<evidence type="ECO:0000305" key="3"/>
<dbReference type="EC" id="3.4.21.92" evidence="2"/>
<dbReference type="EMBL" id="AE002160">
    <property type="protein sequence ID" value="AAF39527.1"/>
    <property type="status" value="ALT_INIT"/>
    <property type="molecule type" value="Genomic_DNA"/>
</dbReference>
<dbReference type="PIR" id="B81672">
    <property type="entry name" value="B81672"/>
</dbReference>
<dbReference type="RefSeq" id="WP_010231304.1">
    <property type="nucleotide sequence ID" value="NZ_CP063055.1"/>
</dbReference>
<dbReference type="SMR" id="Q9PJW1"/>
<dbReference type="MEROPS" id="S14.005"/>
<dbReference type="GeneID" id="1246078"/>
<dbReference type="KEGG" id="cmu:TC_0715"/>
<dbReference type="eggNOG" id="COG0740">
    <property type="taxonomic scope" value="Bacteria"/>
</dbReference>
<dbReference type="HOGENOM" id="CLU_058707_4_0_0"/>
<dbReference type="OrthoDB" id="20499at2"/>
<dbReference type="Proteomes" id="UP000000800">
    <property type="component" value="Chromosome"/>
</dbReference>
<dbReference type="GO" id="GO:0005737">
    <property type="term" value="C:cytoplasm"/>
    <property type="evidence" value="ECO:0007669"/>
    <property type="project" value="UniProtKB-SubCell"/>
</dbReference>
<dbReference type="GO" id="GO:0009368">
    <property type="term" value="C:endopeptidase Clp complex"/>
    <property type="evidence" value="ECO:0007669"/>
    <property type="project" value="TreeGrafter"/>
</dbReference>
<dbReference type="GO" id="GO:0004176">
    <property type="term" value="F:ATP-dependent peptidase activity"/>
    <property type="evidence" value="ECO:0007669"/>
    <property type="project" value="InterPro"/>
</dbReference>
<dbReference type="GO" id="GO:0051117">
    <property type="term" value="F:ATPase binding"/>
    <property type="evidence" value="ECO:0007669"/>
    <property type="project" value="TreeGrafter"/>
</dbReference>
<dbReference type="GO" id="GO:0004252">
    <property type="term" value="F:serine-type endopeptidase activity"/>
    <property type="evidence" value="ECO:0007669"/>
    <property type="project" value="UniProtKB-UniRule"/>
</dbReference>
<dbReference type="GO" id="GO:0006515">
    <property type="term" value="P:protein quality control for misfolded or incompletely synthesized proteins"/>
    <property type="evidence" value="ECO:0007669"/>
    <property type="project" value="TreeGrafter"/>
</dbReference>
<dbReference type="CDD" id="cd07017">
    <property type="entry name" value="S14_ClpP_2"/>
    <property type="match status" value="1"/>
</dbReference>
<dbReference type="FunFam" id="3.90.226.10:FF:000055">
    <property type="entry name" value="ATP-dependent Clp protease proteolytic subunit"/>
    <property type="match status" value="1"/>
</dbReference>
<dbReference type="Gene3D" id="3.90.226.10">
    <property type="entry name" value="2-enoyl-CoA Hydratase, Chain A, domain 1"/>
    <property type="match status" value="1"/>
</dbReference>
<dbReference type="HAMAP" id="MF_00444">
    <property type="entry name" value="ClpP"/>
    <property type="match status" value="1"/>
</dbReference>
<dbReference type="InterPro" id="IPR001907">
    <property type="entry name" value="ClpP"/>
</dbReference>
<dbReference type="InterPro" id="IPR029045">
    <property type="entry name" value="ClpP/crotonase-like_dom_sf"/>
</dbReference>
<dbReference type="InterPro" id="IPR023562">
    <property type="entry name" value="ClpP/TepA"/>
</dbReference>
<dbReference type="InterPro" id="IPR033135">
    <property type="entry name" value="ClpP_His_AS"/>
</dbReference>
<dbReference type="NCBIfam" id="NF009205">
    <property type="entry name" value="PRK12553.1"/>
    <property type="match status" value="1"/>
</dbReference>
<dbReference type="PANTHER" id="PTHR10381">
    <property type="entry name" value="ATP-DEPENDENT CLP PROTEASE PROTEOLYTIC SUBUNIT"/>
    <property type="match status" value="1"/>
</dbReference>
<dbReference type="PANTHER" id="PTHR10381:SF11">
    <property type="entry name" value="ATP-DEPENDENT CLP PROTEASE PROTEOLYTIC SUBUNIT, MITOCHONDRIAL"/>
    <property type="match status" value="1"/>
</dbReference>
<dbReference type="Pfam" id="PF00574">
    <property type="entry name" value="CLP_protease"/>
    <property type="match status" value="1"/>
</dbReference>
<dbReference type="PRINTS" id="PR00127">
    <property type="entry name" value="CLPPROTEASEP"/>
</dbReference>
<dbReference type="SUPFAM" id="SSF52096">
    <property type="entry name" value="ClpP/crotonase"/>
    <property type="match status" value="1"/>
</dbReference>
<dbReference type="PROSITE" id="PS00382">
    <property type="entry name" value="CLP_PROTEASE_HIS"/>
    <property type="match status" value="1"/>
</dbReference>